<accession>A9VSI0</accession>
<keyword id="KW-0349">Heme</keyword>
<keyword id="KW-0350">Heme biosynthesis</keyword>
<keyword id="KW-0408">Iron</keyword>
<keyword id="KW-0479">Metal-binding</keyword>
<keyword id="KW-0560">Oxidoreductase</keyword>
<gene>
    <name evidence="1" type="primary">chdC</name>
    <name type="ordered locus">BcerKBAB4_5181</name>
</gene>
<protein>
    <recommendedName>
        <fullName evidence="1">Coproheme decarboxylase</fullName>
        <ecNumber evidence="1">1.3.98.5</ecNumber>
    </recommendedName>
    <alternativeName>
        <fullName evidence="1">Coproheme III oxidative decarboxylase</fullName>
    </alternativeName>
    <alternativeName>
        <fullName evidence="1">Hydrogen peroxide-dependent heme synthase</fullName>
    </alternativeName>
</protein>
<reference key="1">
    <citation type="journal article" date="2008" name="Chem. Biol. Interact.">
        <title>Extending the Bacillus cereus group genomics to putative food-borne pathogens of different toxicity.</title>
        <authorList>
            <person name="Lapidus A."/>
            <person name="Goltsman E."/>
            <person name="Auger S."/>
            <person name="Galleron N."/>
            <person name="Segurens B."/>
            <person name="Dossat C."/>
            <person name="Land M.L."/>
            <person name="Broussolle V."/>
            <person name="Brillard J."/>
            <person name="Guinebretiere M.-H."/>
            <person name="Sanchis V."/>
            <person name="Nguen-the C."/>
            <person name="Lereclus D."/>
            <person name="Richardson P."/>
            <person name="Wincker P."/>
            <person name="Weissenbach J."/>
            <person name="Ehrlich S.D."/>
            <person name="Sorokin A."/>
        </authorList>
    </citation>
    <scope>NUCLEOTIDE SEQUENCE [LARGE SCALE GENOMIC DNA]</scope>
    <source>
        <strain>KBAB4</strain>
    </source>
</reference>
<evidence type="ECO:0000255" key="1">
    <source>
        <dbReference type="HAMAP-Rule" id="MF_01442"/>
    </source>
</evidence>
<name>CHDC_BACMK</name>
<sequence length="247" mass="28678">MSEATTTLDGWYCLHDLRSIDWAAWKTLSSDERGQAVSEFLNVVEKWNEVATAKKGSHAMYTVVGQKADIMLMILRPTMEELNEIETELNKTTLAEYLVPAYSYVSVVELSNYLPADEDPYQNPQILARLYPELPKANHICFYPMDKRRQGDDNWYMLPMEERKKMMYSHSKIGRQYAGKVRQVISGSVGFDDFEWGVTLFADDVLQFKKLIYEMRFDEVSARYGEFGTFFVGNILPDEKVEKFLHI</sequence>
<comment type="function">
    <text evidence="1">Involved in coproporphyrin-dependent heme b biosynthesis. Catalyzes the decarboxylation of Fe-coproporphyrin III (coproheme) to heme b (protoheme IX), the last step of the pathway. The reaction occurs in a stepwise manner with a three-propionate intermediate.</text>
</comment>
<comment type="catalytic activity">
    <reaction evidence="1">
        <text>Fe-coproporphyrin III + 2 H2O2 + 2 H(+) = heme b + 2 CO2 + 4 H2O</text>
        <dbReference type="Rhea" id="RHEA:56516"/>
        <dbReference type="ChEBI" id="CHEBI:15377"/>
        <dbReference type="ChEBI" id="CHEBI:15378"/>
        <dbReference type="ChEBI" id="CHEBI:16240"/>
        <dbReference type="ChEBI" id="CHEBI:16526"/>
        <dbReference type="ChEBI" id="CHEBI:60344"/>
        <dbReference type="ChEBI" id="CHEBI:68438"/>
        <dbReference type="EC" id="1.3.98.5"/>
    </reaction>
    <physiologicalReaction direction="left-to-right" evidence="1">
        <dbReference type="Rhea" id="RHEA:56517"/>
    </physiologicalReaction>
</comment>
<comment type="catalytic activity">
    <reaction evidence="1">
        <text>Fe-coproporphyrin III + H2O2 + H(+) = harderoheme III + CO2 + 2 H2O</text>
        <dbReference type="Rhea" id="RHEA:57940"/>
        <dbReference type="ChEBI" id="CHEBI:15377"/>
        <dbReference type="ChEBI" id="CHEBI:15378"/>
        <dbReference type="ChEBI" id="CHEBI:16240"/>
        <dbReference type="ChEBI" id="CHEBI:16526"/>
        <dbReference type="ChEBI" id="CHEBI:68438"/>
        <dbReference type="ChEBI" id="CHEBI:142463"/>
    </reaction>
    <physiologicalReaction direction="left-to-right" evidence="1">
        <dbReference type="Rhea" id="RHEA:57941"/>
    </physiologicalReaction>
</comment>
<comment type="catalytic activity">
    <reaction evidence="1">
        <text>harderoheme III + H2O2 + H(+) = heme b + CO2 + 2 H2O</text>
        <dbReference type="Rhea" id="RHEA:57944"/>
        <dbReference type="ChEBI" id="CHEBI:15377"/>
        <dbReference type="ChEBI" id="CHEBI:15378"/>
        <dbReference type="ChEBI" id="CHEBI:16240"/>
        <dbReference type="ChEBI" id="CHEBI:16526"/>
        <dbReference type="ChEBI" id="CHEBI:60344"/>
        <dbReference type="ChEBI" id="CHEBI:142463"/>
    </reaction>
    <physiologicalReaction direction="left-to-right" evidence="1">
        <dbReference type="Rhea" id="RHEA:57945"/>
    </physiologicalReaction>
</comment>
<comment type="cofactor">
    <cofactor evidence="1">
        <name>Fe-coproporphyrin III</name>
        <dbReference type="ChEBI" id="CHEBI:68438"/>
    </cofactor>
    <text evidence="1">Fe-coproporphyrin III acts both as a substrate and a redox cofactor.</text>
</comment>
<comment type="pathway">
    <text evidence="1">Porphyrin-containing compound metabolism; protoheme biosynthesis.</text>
</comment>
<comment type="similarity">
    <text evidence="1">Belongs to the ChdC family. Type 1 subfamily.</text>
</comment>
<proteinExistence type="inferred from homology"/>
<organism>
    <name type="scientific">Bacillus mycoides (strain KBAB4)</name>
    <name type="common">Bacillus weihenstephanensis</name>
    <dbReference type="NCBI Taxonomy" id="315730"/>
    <lineage>
        <taxon>Bacteria</taxon>
        <taxon>Bacillati</taxon>
        <taxon>Bacillota</taxon>
        <taxon>Bacilli</taxon>
        <taxon>Bacillales</taxon>
        <taxon>Bacillaceae</taxon>
        <taxon>Bacillus</taxon>
        <taxon>Bacillus cereus group</taxon>
    </lineage>
</organism>
<feature type="chain" id="PRO_1000145925" description="Coproheme decarboxylase">
    <location>
        <begin position="1"/>
        <end position="247"/>
    </location>
</feature>
<feature type="active site" evidence="1">
    <location>
        <position position="143"/>
    </location>
</feature>
<feature type="binding site" evidence="1">
    <location>
        <position position="129"/>
    </location>
    <ligand>
        <name>Fe-coproporphyrin III</name>
        <dbReference type="ChEBI" id="CHEBI:68438"/>
    </ligand>
</feature>
<feature type="binding site" evidence="1">
    <location>
        <begin position="143"/>
        <end position="147"/>
    </location>
    <ligand>
        <name>Fe-coproporphyrin III</name>
        <dbReference type="ChEBI" id="CHEBI:68438"/>
    </ligand>
</feature>
<feature type="binding site" description="axial binding residue" evidence="1">
    <location>
        <position position="170"/>
    </location>
    <ligand>
        <name>Fe-coproporphyrin III</name>
        <dbReference type="ChEBI" id="CHEBI:68438"/>
    </ligand>
    <ligandPart>
        <name>Fe</name>
        <dbReference type="ChEBI" id="CHEBI:18248"/>
    </ligandPart>
</feature>
<feature type="binding site" evidence="1">
    <location>
        <position position="183"/>
    </location>
    <ligand>
        <name>Fe-coproporphyrin III</name>
        <dbReference type="ChEBI" id="CHEBI:68438"/>
    </ligand>
</feature>
<feature type="binding site" evidence="1">
    <location>
        <position position="221"/>
    </location>
    <ligand>
        <name>Fe-coproporphyrin III</name>
        <dbReference type="ChEBI" id="CHEBI:68438"/>
    </ligand>
</feature>
<dbReference type="EC" id="1.3.98.5" evidence="1"/>
<dbReference type="EMBL" id="CP000903">
    <property type="protein sequence ID" value="ABY46326.1"/>
    <property type="molecule type" value="Genomic_DNA"/>
</dbReference>
<dbReference type="SMR" id="A9VSI0"/>
<dbReference type="KEGG" id="bwe:BcerKBAB4_5181"/>
<dbReference type="eggNOG" id="COG3253">
    <property type="taxonomic scope" value="Bacteria"/>
</dbReference>
<dbReference type="HOGENOM" id="CLU_063226_1_0_9"/>
<dbReference type="UniPathway" id="UPA00252"/>
<dbReference type="Proteomes" id="UP000002154">
    <property type="component" value="Chromosome"/>
</dbReference>
<dbReference type="GO" id="GO:0020037">
    <property type="term" value="F:heme binding"/>
    <property type="evidence" value="ECO:0007669"/>
    <property type="project" value="InterPro"/>
</dbReference>
<dbReference type="GO" id="GO:0046872">
    <property type="term" value="F:metal ion binding"/>
    <property type="evidence" value="ECO:0007669"/>
    <property type="project" value="UniProtKB-KW"/>
</dbReference>
<dbReference type="GO" id="GO:0016634">
    <property type="term" value="F:oxidoreductase activity, acting on the CH-CH group of donors, oxygen as acceptor"/>
    <property type="evidence" value="ECO:0007669"/>
    <property type="project" value="UniProtKB-UniRule"/>
</dbReference>
<dbReference type="GO" id="GO:0004601">
    <property type="term" value="F:peroxidase activity"/>
    <property type="evidence" value="ECO:0007669"/>
    <property type="project" value="InterPro"/>
</dbReference>
<dbReference type="GO" id="GO:0006785">
    <property type="term" value="P:heme B biosynthetic process"/>
    <property type="evidence" value="ECO:0007669"/>
    <property type="project" value="UniProtKB-UniRule"/>
</dbReference>
<dbReference type="Gene3D" id="3.30.70.1030">
    <property type="entry name" value="Apc35880, domain 1"/>
    <property type="match status" value="2"/>
</dbReference>
<dbReference type="HAMAP" id="MF_01442">
    <property type="entry name" value="Coproheme_decarbox_1"/>
    <property type="match status" value="1"/>
</dbReference>
<dbReference type="InterPro" id="IPR031332">
    <property type="entry name" value="CHDC"/>
</dbReference>
<dbReference type="InterPro" id="IPR010644">
    <property type="entry name" value="ChdC/CLD"/>
</dbReference>
<dbReference type="InterPro" id="IPR011008">
    <property type="entry name" value="Dimeric_a/b-barrel"/>
</dbReference>
<dbReference type="NCBIfam" id="NF008913">
    <property type="entry name" value="PRK12276.1"/>
    <property type="match status" value="1"/>
</dbReference>
<dbReference type="PANTHER" id="PTHR36843:SF1">
    <property type="entry name" value="COPROHEME DECARBOXYLASE"/>
    <property type="match status" value="1"/>
</dbReference>
<dbReference type="PANTHER" id="PTHR36843">
    <property type="entry name" value="HEME-DEPENDENT PEROXIDASE YWFI-RELATED"/>
    <property type="match status" value="1"/>
</dbReference>
<dbReference type="Pfam" id="PF06778">
    <property type="entry name" value="Chlor_dismutase"/>
    <property type="match status" value="1"/>
</dbReference>
<dbReference type="SUPFAM" id="SSF54909">
    <property type="entry name" value="Dimeric alpha+beta barrel"/>
    <property type="match status" value="1"/>
</dbReference>